<evidence type="ECO:0000250" key="1">
    <source>
        <dbReference type="UniProtKB" id="P04798"/>
    </source>
</evidence>
<evidence type="ECO:0000255" key="2"/>
<evidence type="ECO:0000255" key="3">
    <source>
        <dbReference type="PROSITE-ProRule" id="PRU00498"/>
    </source>
</evidence>
<evidence type="ECO:0000269" key="4">
    <source>
    </source>
</evidence>
<evidence type="ECO:0000303" key="5">
    <source>
    </source>
</evidence>
<evidence type="ECO:0000305" key="6"/>
<evidence type="ECO:0000305" key="7">
    <source>
    </source>
</evidence>
<gene>
    <name evidence="5" type="primary">ucsK</name>
</gene>
<protein>
    <recommendedName>
        <fullName evidence="5">Cytochrome P450 monooxygenase ucsK</fullName>
        <ecNumber evidence="4">1.-.-.-</ecNumber>
    </recommendedName>
    <alternativeName>
        <fullName evidence="5">UCS1025A pyrrolizidinone biosynthesis cluster protein K</fullName>
    </alternativeName>
</protein>
<keyword id="KW-0325">Glycoprotein</keyword>
<keyword id="KW-0349">Heme</keyword>
<keyword id="KW-0408">Iron</keyword>
<keyword id="KW-0472">Membrane</keyword>
<keyword id="KW-0479">Metal-binding</keyword>
<keyword id="KW-0503">Monooxygenase</keyword>
<keyword id="KW-0560">Oxidoreductase</keyword>
<keyword id="KW-0812">Transmembrane</keyword>
<keyword id="KW-1133">Transmembrane helix</keyword>
<feature type="chain" id="PRO_0000450542" description="Cytochrome P450 monooxygenase ucsK">
    <location>
        <begin position="1"/>
        <end position="526"/>
    </location>
</feature>
<feature type="transmembrane region" description="Helical" evidence="2">
    <location>
        <begin position="7"/>
        <end position="27"/>
    </location>
</feature>
<feature type="binding site" description="axial binding residue" evidence="1">
    <location>
        <position position="467"/>
    </location>
    <ligand>
        <name>heme</name>
        <dbReference type="ChEBI" id="CHEBI:30413"/>
    </ligand>
    <ligandPart>
        <name>Fe</name>
        <dbReference type="ChEBI" id="CHEBI:18248"/>
    </ligandPart>
</feature>
<feature type="glycosylation site" description="N-linked (GlcNAc...) asparagine" evidence="3">
    <location>
        <position position="403"/>
    </location>
</feature>
<proteinExistence type="evidence at protein level"/>
<organism>
    <name type="scientific">Acremonium sp</name>
    <dbReference type="NCBI Taxonomy" id="2046025"/>
    <lineage>
        <taxon>Eukaryota</taxon>
        <taxon>Fungi</taxon>
        <taxon>Dikarya</taxon>
        <taxon>Ascomycota</taxon>
        <taxon>Pezizomycotina</taxon>
        <taxon>Sordariomycetes</taxon>
        <taxon>Hypocreomycetidae</taxon>
        <taxon>Hypocreales</taxon>
        <taxon>Hypocreales incertae sedis</taxon>
        <taxon>Acremonium</taxon>
    </lineage>
</organism>
<sequence>MALLNTPVLAAATAVSFGFYLAGLFVYRVFYHRLSHIPGPRLAAFTVYYQSYYDFFPHQGQFLWKLVELHKAYGPIIRIGPDEVHVNDARFYKEMYGSSVHKRNKSPIWYWMDGLGAVGDQSMFITLDHDHHRLRKAGLGTYFSKRKVQELEPRVKEKVLLLRQRLLERAGRGAINLKDAFGGMALDIITQYCFNQCMGALDRDDLGREWNQLMAAGVKINPFARTFPTVARTLLRLPKWVLGVSGMVSTTGEFLDLADRLSANARNEAIRDLQEGKYTLTDDADSRTVLHSMMRSDVLPEHEKGERRLQADGMTLIAAGFDTTSRTLTVVFYHLLAKPAMRARVLEEIRTLMPTPSSPLPTVAQLEQLPYLTCVIHEGTRLAHGVAGRLVRIAPEEDLVYHNSSDDTEYTIPRGATFGQSSYLVHTDESIYPNPHDFIPERYWSDDGKPTDAERYLVAFGKGTRMCSGINLAFAELYLTIAALLGAVDMKLAPGTTEHDVSLVAELFVGVLPESPGVRVNVVGSL</sequence>
<dbReference type="EC" id="1.-.-.-" evidence="4"/>
<dbReference type="EMBL" id="MH375774">
    <property type="protein sequence ID" value="QBC88155.1"/>
    <property type="molecule type" value="Genomic_DNA"/>
</dbReference>
<dbReference type="SMR" id="A0A411KUQ5"/>
<dbReference type="GlyCosmos" id="A0A411KUQ5">
    <property type="glycosylation" value="1 site, No reported glycans"/>
</dbReference>
<dbReference type="GO" id="GO:0016020">
    <property type="term" value="C:membrane"/>
    <property type="evidence" value="ECO:0007669"/>
    <property type="project" value="UniProtKB-SubCell"/>
</dbReference>
<dbReference type="GO" id="GO:0020037">
    <property type="term" value="F:heme binding"/>
    <property type="evidence" value="ECO:0007669"/>
    <property type="project" value="InterPro"/>
</dbReference>
<dbReference type="GO" id="GO:0005506">
    <property type="term" value="F:iron ion binding"/>
    <property type="evidence" value="ECO:0007669"/>
    <property type="project" value="InterPro"/>
</dbReference>
<dbReference type="GO" id="GO:0004497">
    <property type="term" value="F:monooxygenase activity"/>
    <property type="evidence" value="ECO:0007669"/>
    <property type="project" value="UniProtKB-KW"/>
</dbReference>
<dbReference type="GO" id="GO:0016705">
    <property type="term" value="F:oxidoreductase activity, acting on paired donors, with incorporation or reduction of molecular oxygen"/>
    <property type="evidence" value="ECO:0007669"/>
    <property type="project" value="InterPro"/>
</dbReference>
<dbReference type="CDD" id="cd11062">
    <property type="entry name" value="CYP58-like"/>
    <property type="match status" value="1"/>
</dbReference>
<dbReference type="Gene3D" id="1.10.630.10">
    <property type="entry name" value="Cytochrome P450"/>
    <property type="match status" value="1"/>
</dbReference>
<dbReference type="InterPro" id="IPR001128">
    <property type="entry name" value="Cyt_P450"/>
</dbReference>
<dbReference type="InterPro" id="IPR002401">
    <property type="entry name" value="Cyt_P450_E_grp-I"/>
</dbReference>
<dbReference type="InterPro" id="IPR036396">
    <property type="entry name" value="Cyt_P450_sf"/>
</dbReference>
<dbReference type="InterPro" id="IPR050121">
    <property type="entry name" value="Cytochrome_P450_monoxygenase"/>
</dbReference>
<dbReference type="PANTHER" id="PTHR24305">
    <property type="entry name" value="CYTOCHROME P450"/>
    <property type="match status" value="1"/>
</dbReference>
<dbReference type="PANTHER" id="PTHR24305:SF157">
    <property type="entry name" value="N-ACETYLTRYPTOPHAN 6-HYDROXYLASE IVOC-RELATED"/>
    <property type="match status" value="1"/>
</dbReference>
<dbReference type="Pfam" id="PF00067">
    <property type="entry name" value="p450"/>
    <property type="match status" value="1"/>
</dbReference>
<dbReference type="PRINTS" id="PR00463">
    <property type="entry name" value="EP450I"/>
</dbReference>
<dbReference type="PRINTS" id="PR00385">
    <property type="entry name" value="P450"/>
</dbReference>
<dbReference type="SUPFAM" id="SSF48264">
    <property type="entry name" value="Cytochrome P450"/>
    <property type="match status" value="1"/>
</dbReference>
<name>UCSK_ACRSP</name>
<reference key="1">
    <citation type="journal article" date="2018" name="J. Am. Chem. Soc.">
        <title>Genome mining and assembly-line biosynthesis of the UCS1025A pyrrolizidinone family of fungal alkaloids.</title>
        <authorList>
            <person name="Li L."/>
            <person name="Tang M.C."/>
            <person name="Tang S."/>
            <person name="Gao S."/>
            <person name="Soliman S."/>
            <person name="Hang L."/>
            <person name="Xu W."/>
            <person name="Ye T."/>
            <person name="Watanabe K."/>
            <person name="Tang Y."/>
        </authorList>
    </citation>
    <scope>NUCLEOTIDE SEQUENCE [GENOMIC DNA]</scope>
    <scope>FUNCTION</scope>
    <scope>DISRUPTION PHENOTYPE</scope>
    <scope>CATALYTIC ACTIVITY</scope>
    <scope>PATHWAY</scope>
    <source>
        <strain>KY4917</strain>
    </source>
</reference>
<accession>A0A411KUQ5</accession>
<comment type="function">
    <text evidence="4 7">Cytochrome P450 monooxygenase; part of the gene cluster that mediates the biosynthesis of UCS1025A, a member of the pyrrolizidinone family that acts as a strong telomerase inhibitor and displays potent antibacterial and antitumor properties (PubMed:29373009). These compounds share a hemiaminal-containing pyrrolizidinone core fused with a gamma-lactone, giving a furopyrrolizidine that is connected to a decalin fragment (PubMed:29373009). The polyketide synthase module (PKS) of the PKS-NRPS ucsA is responsible for the synthesis of the polyketide backbone via the condensation of an acetyl-CoA starter unit with 6 malonyl-CoA units (PubMed:29373009). The downstream nonribosomal peptide synthetase (NRPS) module then amidates the carboxyl end of the polyketide with a 2S,3S-methylproline derived from L-isoleucine by the 2-oxoglutarate-dependent dioxygenase ucsF which converts L-isoleucine to (4S,5S)-4-methylpyrroline-5-carboxylate that is further converted to 2S,3S-methylproline by the pyrroline-5-carboxylate reductase ucsG (PubMed:29373009). Reductive release of the completed aminoacyl polyketide from the assembly line can form the 3-pyrrolin-2-one structure via an intramolecular Knoevenagel reaction (PubMed:29373009). Because ucsA lacks a designated enoylreductase (ER) domain, the required activity is provided the enoyl reductase ucsL (PubMed:29373009). This keto acyclic precursor is the substrate of the Diels-Alderase ucsH, that catalyzes the Diels-Alder cycloaddition (PubMed:29373009). Oxidation of the 3S-methyl group to a carboxylate by the cytochrome P450 monooxygenase ucsK allows an oxa-Michael cyclization that might involve the reductase/dehydrogenase ucsI and which furnishes the furopyrrolizidine (PubMed:29373009). The oxidase ucsJ likely plays a critical role in stereoselective reduction of the C5-C6 double bond to afford the required R-configured carboxylate group (Probable). Further enolization and oxidation at C5 by an unidentified enzyme affords the last intermediate that can undergo oxa-Michael cyclization to yield UCS1025A (Probable).</text>
</comment>
<comment type="cofactor">
    <cofactor evidence="1">
        <name>heme</name>
        <dbReference type="ChEBI" id="CHEBI:30413"/>
    </cofactor>
</comment>
<comment type="pathway">
    <text evidence="4">Mycotoxin biosynthesis.</text>
</comment>
<comment type="subcellular location">
    <subcellularLocation>
        <location evidence="2">Membrane</location>
        <topology evidence="2">Single-pass membrane protein</topology>
    </subcellularLocation>
</comment>
<comment type="disruption phenotype">
    <text evidence="4">Leads to the accumulation of intermediate diastereomers that are methylated at C6 of the pyrrolizidinone.</text>
</comment>
<comment type="similarity">
    <text evidence="6">Belongs to the cytochrome P450 family.</text>
</comment>